<accession>A2C6Q8</accession>
<comment type="function">
    <text evidence="1">Required for maturation of 30S ribosomal subunits.</text>
</comment>
<comment type="subcellular location">
    <subcellularLocation>
        <location evidence="1">Cytoplasm</location>
    </subcellularLocation>
</comment>
<comment type="similarity">
    <text evidence="1">Belongs to the RimP family.</text>
</comment>
<proteinExistence type="inferred from homology"/>
<evidence type="ECO:0000255" key="1">
    <source>
        <dbReference type="HAMAP-Rule" id="MF_01077"/>
    </source>
</evidence>
<reference key="1">
    <citation type="journal article" date="2007" name="PLoS Genet.">
        <title>Patterns and implications of gene gain and loss in the evolution of Prochlorococcus.</title>
        <authorList>
            <person name="Kettler G.C."/>
            <person name="Martiny A.C."/>
            <person name="Huang K."/>
            <person name="Zucker J."/>
            <person name="Coleman M.L."/>
            <person name="Rodrigue S."/>
            <person name="Chen F."/>
            <person name="Lapidus A."/>
            <person name="Ferriera S."/>
            <person name="Johnson J."/>
            <person name="Steglich C."/>
            <person name="Church G.M."/>
            <person name="Richardson P."/>
            <person name="Chisholm S.W."/>
        </authorList>
    </citation>
    <scope>NUCLEOTIDE SEQUENCE [LARGE SCALE GENOMIC DNA]</scope>
    <source>
        <strain>MIT 9303</strain>
    </source>
</reference>
<protein>
    <recommendedName>
        <fullName evidence="1">Ribosome maturation factor RimP</fullName>
    </recommendedName>
</protein>
<keyword id="KW-0963">Cytoplasm</keyword>
<keyword id="KW-0690">Ribosome biogenesis</keyword>
<organism>
    <name type="scientific">Prochlorococcus marinus (strain MIT 9303)</name>
    <dbReference type="NCBI Taxonomy" id="59922"/>
    <lineage>
        <taxon>Bacteria</taxon>
        <taxon>Bacillati</taxon>
        <taxon>Cyanobacteriota</taxon>
        <taxon>Cyanophyceae</taxon>
        <taxon>Synechococcales</taxon>
        <taxon>Prochlorococcaceae</taxon>
        <taxon>Prochlorococcus</taxon>
    </lineage>
</organism>
<sequence>MPHPLLPDLETLASATATGKGYKLCCVQVFTHLIPMTIQVQIRRKDGSDVSLDDCAHFSASMDEALEASQLFTEAYVLEISSPGIGDQLHSDQDFLTFRGFPVEISFRDDDSDLHQAGLLHKRSDEHVHINIKGRIQRIPRKAVTCVRLTNPTG</sequence>
<gene>
    <name evidence="1" type="primary">rimP</name>
    <name type="ordered locus">P9303_04161</name>
</gene>
<name>RIMP_PROM3</name>
<dbReference type="EMBL" id="CP000554">
    <property type="protein sequence ID" value="ABM77168.1"/>
    <property type="molecule type" value="Genomic_DNA"/>
</dbReference>
<dbReference type="RefSeq" id="WP_011825093.1">
    <property type="nucleotide sequence ID" value="NC_008820.1"/>
</dbReference>
<dbReference type="SMR" id="A2C6Q8"/>
<dbReference type="STRING" id="59922.P9303_04161"/>
<dbReference type="KEGG" id="pmf:P9303_04161"/>
<dbReference type="HOGENOM" id="CLU_070525_2_1_3"/>
<dbReference type="BioCyc" id="PMAR59922:G1G80-387-MONOMER"/>
<dbReference type="Proteomes" id="UP000002274">
    <property type="component" value="Chromosome"/>
</dbReference>
<dbReference type="GO" id="GO:0005829">
    <property type="term" value="C:cytosol"/>
    <property type="evidence" value="ECO:0007669"/>
    <property type="project" value="TreeGrafter"/>
</dbReference>
<dbReference type="GO" id="GO:0000028">
    <property type="term" value="P:ribosomal small subunit assembly"/>
    <property type="evidence" value="ECO:0007669"/>
    <property type="project" value="TreeGrafter"/>
</dbReference>
<dbReference type="GO" id="GO:0006412">
    <property type="term" value="P:translation"/>
    <property type="evidence" value="ECO:0007669"/>
    <property type="project" value="TreeGrafter"/>
</dbReference>
<dbReference type="Gene3D" id="3.30.300.70">
    <property type="entry name" value="RimP-like superfamily, N-terminal"/>
    <property type="match status" value="1"/>
</dbReference>
<dbReference type="HAMAP" id="MF_01077">
    <property type="entry name" value="RimP"/>
    <property type="match status" value="1"/>
</dbReference>
<dbReference type="InterPro" id="IPR003728">
    <property type="entry name" value="Ribosome_maturation_RimP"/>
</dbReference>
<dbReference type="InterPro" id="IPR028989">
    <property type="entry name" value="RimP_N"/>
</dbReference>
<dbReference type="InterPro" id="IPR035956">
    <property type="entry name" value="RimP_N_sf"/>
</dbReference>
<dbReference type="NCBIfam" id="NF011227">
    <property type="entry name" value="PRK14634.1"/>
    <property type="match status" value="1"/>
</dbReference>
<dbReference type="PANTHER" id="PTHR33867">
    <property type="entry name" value="RIBOSOME MATURATION FACTOR RIMP"/>
    <property type="match status" value="1"/>
</dbReference>
<dbReference type="PANTHER" id="PTHR33867:SF1">
    <property type="entry name" value="RIBOSOME MATURATION FACTOR RIMP"/>
    <property type="match status" value="1"/>
</dbReference>
<dbReference type="Pfam" id="PF02576">
    <property type="entry name" value="RimP_N"/>
    <property type="match status" value="1"/>
</dbReference>
<dbReference type="SUPFAM" id="SSF75420">
    <property type="entry name" value="YhbC-like, N-terminal domain"/>
    <property type="match status" value="1"/>
</dbReference>
<feature type="chain" id="PRO_1000064744" description="Ribosome maturation factor RimP">
    <location>
        <begin position="1"/>
        <end position="154"/>
    </location>
</feature>